<gene>
    <name evidence="7" type="primary">GT7</name>
</gene>
<evidence type="ECO:0000250" key="1">
    <source>
        <dbReference type="UniProtKB" id="A0A0A1HA03"/>
    </source>
</evidence>
<evidence type="ECO:0000250" key="2">
    <source>
        <dbReference type="UniProtKB" id="P51094"/>
    </source>
</evidence>
<evidence type="ECO:0000255" key="3"/>
<evidence type="ECO:0000269" key="4">
    <source>
    </source>
</evidence>
<evidence type="ECO:0000303" key="5">
    <source>
    </source>
</evidence>
<evidence type="ECO:0000305" key="6"/>
<evidence type="ECO:0000312" key="7">
    <source>
        <dbReference type="EMBL" id="ABB92749.1"/>
    </source>
</evidence>
<proteinExistence type="evidence at protein level"/>
<protein>
    <recommendedName>
        <fullName evidence="5">UDP-glucose flavonoid 3-O-glucosyltransferase 7</fullName>
        <ecNumber evidence="4">2.4.1.91</ecNumber>
    </recommendedName>
    <alternativeName>
        <fullName evidence="5">Flavonol 3-O-glucosyltransferase 7</fullName>
        <shortName evidence="5">FaGT7</shortName>
    </alternativeName>
</protein>
<accession>Q2V6J9</accession>
<name>UFOG7_FRAAN</name>
<reference evidence="6 7" key="1">
    <citation type="journal article" date="2008" name="J. Exp. Bot.">
        <title>Multi-substrate flavonol O-glucosyltransferases from strawberry (Fragaria x ananassa) achene and receptacle.</title>
        <authorList>
            <person name="Griesser M."/>
            <person name="Vitzthum F."/>
            <person name="Fink B."/>
            <person name="Bellido M.L."/>
            <person name="Raasch C."/>
            <person name="Munoz-Blanco J."/>
            <person name="Schwab W."/>
        </authorList>
    </citation>
    <scope>NUCLEOTIDE SEQUENCE [MRNA]</scope>
    <scope>FUNCTION</scope>
    <scope>CATALYTIC ACTIVITY</scope>
    <scope>BIOPHYSICOCHEMICAL PROPERTIES</scope>
    <scope>TISSUE SPECIFICITY</scope>
    <scope>DEVELOPMENTAL STAGE</scope>
    <scope>INDUCTION</scope>
    <source>
        <strain evidence="4">cv. Elsanta</strain>
        <tissue evidence="4">Fruit</tissue>
    </source>
</reference>
<dbReference type="EC" id="2.4.1.91" evidence="4"/>
<dbReference type="EMBL" id="DQ289588">
    <property type="protein sequence ID" value="ABB92749.1"/>
    <property type="molecule type" value="mRNA"/>
</dbReference>
<dbReference type="SMR" id="Q2V6J9"/>
<dbReference type="CAZy" id="GT1">
    <property type="family name" value="Glycosyltransferase Family 1"/>
</dbReference>
<dbReference type="GO" id="GO:0047893">
    <property type="term" value="F:flavonol 3-O-glucosyltransferase activity"/>
    <property type="evidence" value="ECO:0007669"/>
    <property type="project" value="UniProtKB-EC"/>
</dbReference>
<dbReference type="CDD" id="cd03784">
    <property type="entry name" value="GT1_Gtf-like"/>
    <property type="match status" value="1"/>
</dbReference>
<dbReference type="FunFam" id="3.40.50.2000:FF:000047">
    <property type="entry name" value="Glycosyltransferase"/>
    <property type="match status" value="1"/>
</dbReference>
<dbReference type="FunFam" id="3.40.50.2000:FF:000071">
    <property type="entry name" value="Glycosyltransferase"/>
    <property type="match status" value="1"/>
</dbReference>
<dbReference type="Gene3D" id="3.40.50.2000">
    <property type="entry name" value="Glycogen Phosphorylase B"/>
    <property type="match status" value="2"/>
</dbReference>
<dbReference type="InterPro" id="IPR002213">
    <property type="entry name" value="UDP_glucos_trans"/>
</dbReference>
<dbReference type="InterPro" id="IPR035595">
    <property type="entry name" value="UDP_glycos_trans_CS"/>
</dbReference>
<dbReference type="PANTHER" id="PTHR48047">
    <property type="entry name" value="GLYCOSYLTRANSFERASE"/>
    <property type="match status" value="1"/>
</dbReference>
<dbReference type="PANTHER" id="PTHR48047:SF45">
    <property type="entry name" value="SCOPOLETIN GLUCOSYLTRANSFERASE-LIKE"/>
    <property type="match status" value="1"/>
</dbReference>
<dbReference type="Pfam" id="PF00201">
    <property type="entry name" value="UDPGT"/>
    <property type="match status" value="1"/>
</dbReference>
<dbReference type="SUPFAM" id="SSF53756">
    <property type="entry name" value="UDP-Glycosyltransferase/glycogen phosphorylase"/>
    <property type="match status" value="1"/>
</dbReference>
<dbReference type="PROSITE" id="PS00375">
    <property type="entry name" value="UDPGT"/>
    <property type="match status" value="1"/>
</dbReference>
<organism>
    <name type="scientific">Fragaria ananassa</name>
    <name type="common">Strawberry</name>
    <name type="synonym">Fragaria chiloensis x Fragaria virginiana</name>
    <dbReference type="NCBI Taxonomy" id="3747"/>
    <lineage>
        <taxon>Eukaryota</taxon>
        <taxon>Viridiplantae</taxon>
        <taxon>Streptophyta</taxon>
        <taxon>Embryophyta</taxon>
        <taxon>Tracheophyta</taxon>
        <taxon>Spermatophyta</taxon>
        <taxon>Magnoliopsida</taxon>
        <taxon>eudicotyledons</taxon>
        <taxon>Gunneridae</taxon>
        <taxon>Pentapetalae</taxon>
        <taxon>rosids</taxon>
        <taxon>fabids</taxon>
        <taxon>Rosales</taxon>
        <taxon>Rosaceae</taxon>
        <taxon>Rosoideae</taxon>
        <taxon>Potentilleae</taxon>
        <taxon>Fragariinae</taxon>
        <taxon>Fragaria</taxon>
    </lineage>
</organism>
<comment type="function">
    <text evidence="4">Broad spectrum multifunctional glucosyltransferase. Catalyzes the formation of flavonol 3-O- and 4'-O-glucosides during fruit ripening. Accepted substrates include several flavonoids, hydroxycoumarins and beta-naphthols. Uses UDP-Glc as a sugar donor, but not UDP-Gal or UDP-GlcUA. May also be involved in detoxification of xenobiotics.</text>
</comment>
<comment type="catalytic activity">
    <reaction evidence="4">
        <text>a flavonol + UDP-alpha-D-glucose = a flavonol 3-O-beta-D-glucoside + UDP + H(+)</text>
        <dbReference type="Rhea" id="RHEA:22300"/>
        <dbReference type="ChEBI" id="CHEBI:15378"/>
        <dbReference type="ChEBI" id="CHEBI:16816"/>
        <dbReference type="ChEBI" id="CHEBI:28802"/>
        <dbReference type="ChEBI" id="CHEBI:58223"/>
        <dbReference type="ChEBI" id="CHEBI:58885"/>
        <dbReference type="EC" id="2.4.1.91"/>
    </reaction>
</comment>
<comment type="biophysicochemical properties">
    <kinetics>
        <KM evidence="4">3.5 uM for isorhamnetin</KM>
        <KM evidence="4">0.6 mM for UDP-glucose</KM>
        <Vmax evidence="4">2.8 nmol/sec/mg enzyme with isorhamnetin as substrate</Vmax>
        <Vmax evidence="4">2.7 nmol/sec/mg enzyme with UDP-glucose as substrate</Vmax>
        <text evidence="4">The kinetic constants are determined for the recombinant GST-fusion protein.</text>
    </kinetics>
    <phDependence>
        <text evidence="4">Optimum pH is 6.5.</text>
    </phDependence>
    <temperatureDependence>
        <text evidence="4">Optimum temperature is 45 degrees Celsius.</text>
    </temperatureDependence>
</comment>
<comment type="tissue specificity">
    <text evidence="4">Strongly expressed in achenes and receptacles.</text>
</comment>
<comment type="developmental stage">
    <text evidence="4">The expression in receptacles is ripening-related, with highest expression detected in red fruit.</text>
</comment>
<comment type="induction">
    <text evidence="4">By de-achening. By injection with salicylic acid, with transcript levels increasing by a factor of 5-6 at 4 hours post-injection, remaining stable until 6 hours post-injection and falling below control levels at 8 hours post-injection. Down-regulated by synthetic auxin naphthaleneacetic acid (NAA).</text>
</comment>
<comment type="similarity">
    <text evidence="3">Belongs to the UDP-glycosyltransferase family.</text>
</comment>
<keyword id="KW-0328">Glycosyltransferase</keyword>
<keyword id="KW-0808">Transferase</keyword>
<feature type="chain" id="PRO_0000413770" description="UDP-glucose flavonoid 3-O-glucosyltransferase 7">
    <location>
        <begin position="1"/>
        <end position="487"/>
    </location>
</feature>
<feature type="active site" description="Proton acceptor" evidence="1">
    <location>
        <position position="23"/>
    </location>
</feature>
<feature type="active site" description="Charge relay" evidence="1">
    <location>
        <position position="121"/>
    </location>
</feature>
<feature type="binding site" evidence="2">
    <location>
        <position position="23"/>
    </location>
    <ligand>
        <name>an anthocyanidin</name>
        <dbReference type="ChEBI" id="CHEBI:143576"/>
    </ligand>
</feature>
<feature type="binding site" evidence="1">
    <location>
        <position position="345"/>
    </location>
    <ligand>
        <name>UDP-alpha-D-glucose</name>
        <dbReference type="ChEBI" id="CHEBI:58885"/>
    </ligand>
</feature>
<feature type="binding site" evidence="1">
    <location>
        <position position="347"/>
    </location>
    <ligand>
        <name>UDP-alpha-D-glucose</name>
        <dbReference type="ChEBI" id="CHEBI:58885"/>
    </ligand>
</feature>
<feature type="binding site" evidence="1">
    <location>
        <position position="362"/>
    </location>
    <ligand>
        <name>UDP-alpha-D-glucose</name>
        <dbReference type="ChEBI" id="CHEBI:58885"/>
    </ligand>
</feature>
<feature type="binding site" evidence="1">
    <location>
        <position position="365"/>
    </location>
    <ligand>
        <name>UDP-alpha-D-glucose</name>
        <dbReference type="ChEBI" id="CHEBI:58885"/>
    </ligand>
</feature>
<feature type="binding site" evidence="1">
    <location>
        <position position="366"/>
    </location>
    <ligand>
        <name>UDP-alpha-D-glucose</name>
        <dbReference type="ChEBI" id="CHEBI:58885"/>
    </ligand>
</feature>
<feature type="binding site" evidence="1">
    <location>
        <position position="367"/>
    </location>
    <ligand>
        <name>UDP-alpha-D-glucose</name>
        <dbReference type="ChEBI" id="CHEBI:58885"/>
    </ligand>
</feature>
<feature type="binding site" evidence="1">
    <location>
        <position position="370"/>
    </location>
    <ligand>
        <name>UDP-alpha-D-glucose</name>
        <dbReference type="ChEBI" id="CHEBI:58885"/>
    </ligand>
</feature>
<feature type="binding site" evidence="2">
    <location>
        <position position="385"/>
    </location>
    <ligand>
        <name>an anthocyanidin</name>
        <dbReference type="ChEBI" id="CHEBI:143576"/>
    </ligand>
</feature>
<feature type="binding site" evidence="1">
    <location>
        <position position="386"/>
    </location>
    <ligand>
        <name>UDP-alpha-D-glucose</name>
        <dbReference type="ChEBI" id="CHEBI:58885"/>
    </ligand>
</feature>
<feature type="binding site" evidence="1">
    <location>
        <position position="387"/>
    </location>
    <ligand>
        <name>UDP-alpha-D-glucose</name>
        <dbReference type="ChEBI" id="CHEBI:58885"/>
    </ligand>
</feature>
<sequence length="487" mass="54652">MAMETKSCQQLHIFFLPFMARGHSIPLTDIAKLFSSHGARCTIVTTPLNAPLFSKATQRGEIELVLIKFPSAEAGLPQDCESADLITTQDMLGKFVKATFLIEPHFEKILDEHRPHCLVADAFFTWATDVAAKFRIPRLYFHGTGFFALCASLSVMMYQPHSNLSSDSESFVIPNLPDEIKMTRSQLPVFPDESEFMKMLKASIEIEERSYGVIVNSFYELEPAYANHYRKVFGRKAWHIGPVSFCNKAIEDKAERGSIKSSTAEKHECLKWLDSKKPRSVVYVSFGSMVRFADSQLLEIATGLEASGQDFIWVVKKEKKEVEEWLPEGFEKRMEGKGLIIRDWAPQVLILEHEAIGAFVTHCGWNSILEAVSAGVPMITWPVFGEQFYNEKLVTEIHRIGVPVGSEKWALSFVDVNAETEGRVRREAIEEAVTRIMVGDEAVETRSRVKELGENARRAVEEGGSSFLDLSALVGELNDLAFGGLVE</sequence>